<accession>Q54N54</accession>
<name>Y6531_DICDI</name>
<organism>
    <name type="scientific">Dictyostelium discoideum</name>
    <name type="common">Social amoeba</name>
    <dbReference type="NCBI Taxonomy" id="44689"/>
    <lineage>
        <taxon>Eukaryota</taxon>
        <taxon>Amoebozoa</taxon>
        <taxon>Evosea</taxon>
        <taxon>Eumycetozoa</taxon>
        <taxon>Dictyostelia</taxon>
        <taxon>Dictyosteliales</taxon>
        <taxon>Dictyosteliaceae</taxon>
        <taxon>Dictyostelium</taxon>
    </lineage>
</organism>
<proteinExistence type="predicted"/>
<protein>
    <recommendedName>
        <fullName>Putative uncharacterized protein DDB_G0285495</fullName>
    </recommendedName>
</protein>
<sequence>MTDKDIPDEWDTISEDQIKNNLLTLEISNKLKELKLLEEEYEKLEEKEKEIENKELNKTDNKIKEFIKNEIKKGGEEINKEQEQDGEEEEPLLLINFTKWSYNKIKYIGGGKIENQDLFDRLLNKLNSEEQFFITMTDDLLERELAFHTTNKQWRDDIKQLEQAYKGDYFSLLSYPPMLGGFLLESIWSKIKERTEWKSVNILKCIYLAKTNRSLLYKHNMALAIEFMALEQKLLGPTAKRLKDEEDLEYKIKLRQYEEIMQKRYENEINEGIIKNLQQVIYTNEGISNNLNRINNNKINEINDDYNNNNNENYSGSDNDDGSYCSTCDGSGSDYDNDENNDDENNDENNNNNNNNNNNNNNNNDEDRMIEEIEGDDTTSTSFQQSDDDEADNELDEEDNRKNKKEKLIEERKIKEIEAERIHKENEKRKIEAPPPPVLNILDKIIAMIFSKLTVAQSNKESHYQMLNRLESSIKETWIEEFGCLPPNCLWREEQ</sequence>
<reference key="1">
    <citation type="journal article" date="2005" name="Nature">
        <title>The genome of the social amoeba Dictyostelium discoideum.</title>
        <authorList>
            <person name="Eichinger L."/>
            <person name="Pachebat J.A."/>
            <person name="Gloeckner G."/>
            <person name="Rajandream M.A."/>
            <person name="Sucgang R."/>
            <person name="Berriman M."/>
            <person name="Song J."/>
            <person name="Olsen R."/>
            <person name="Szafranski K."/>
            <person name="Xu Q."/>
            <person name="Tunggal B."/>
            <person name="Kummerfeld S."/>
            <person name="Madera M."/>
            <person name="Konfortov B.A."/>
            <person name="Rivero F."/>
            <person name="Bankier A.T."/>
            <person name="Lehmann R."/>
            <person name="Hamlin N."/>
            <person name="Davies R."/>
            <person name="Gaudet P."/>
            <person name="Fey P."/>
            <person name="Pilcher K."/>
            <person name="Chen G."/>
            <person name="Saunders D."/>
            <person name="Sodergren E.J."/>
            <person name="Davis P."/>
            <person name="Kerhornou A."/>
            <person name="Nie X."/>
            <person name="Hall N."/>
            <person name="Anjard C."/>
            <person name="Hemphill L."/>
            <person name="Bason N."/>
            <person name="Farbrother P."/>
            <person name="Desany B."/>
            <person name="Just E."/>
            <person name="Morio T."/>
            <person name="Rost R."/>
            <person name="Churcher C.M."/>
            <person name="Cooper J."/>
            <person name="Haydock S."/>
            <person name="van Driessche N."/>
            <person name="Cronin A."/>
            <person name="Goodhead I."/>
            <person name="Muzny D.M."/>
            <person name="Mourier T."/>
            <person name="Pain A."/>
            <person name="Lu M."/>
            <person name="Harper D."/>
            <person name="Lindsay R."/>
            <person name="Hauser H."/>
            <person name="James K.D."/>
            <person name="Quiles M."/>
            <person name="Madan Babu M."/>
            <person name="Saito T."/>
            <person name="Buchrieser C."/>
            <person name="Wardroper A."/>
            <person name="Felder M."/>
            <person name="Thangavelu M."/>
            <person name="Johnson D."/>
            <person name="Knights A."/>
            <person name="Loulseged H."/>
            <person name="Mungall K.L."/>
            <person name="Oliver K."/>
            <person name="Price C."/>
            <person name="Quail M.A."/>
            <person name="Urushihara H."/>
            <person name="Hernandez J."/>
            <person name="Rabbinowitsch E."/>
            <person name="Steffen D."/>
            <person name="Sanders M."/>
            <person name="Ma J."/>
            <person name="Kohara Y."/>
            <person name="Sharp S."/>
            <person name="Simmonds M.N."/>
            <person name="Spiegler S."/>
            <person name="Tivey A."/>
            <person name="Sugano S."/>
            <person name="White B."/>
            <person name="Walker D."/>
            <person name="Woodward J.R."/>
            <person name="Winckler T."/>
            <person name="Tanaka Y."/>
            <person name="Shaulsky G."/>
            <person name="Schleicher M."/>
            <person name="Weinstock G.M."/>
            <person name="Rosenthal A."/>
            <person name="Cox E.C."/>
            <person name="Chisholm R.L."/>
            <person name="Gibbs R.A."/>
            <person name="Loomis W.F."/>
            <person name="Platzer M."/>
            <person name="Kay R.R."/>
            <person name="Williams J.G."/>
            <person name="Dear P.H."/>
            <person name="Noegel A.A."/>
            <person name="Barrell B.G."/>
            <person name="Kuspa A."/>
        </authorList>
    </citation>
    <scope>NUCLEOTIDE SEQUENCE [LARGE SCALE GENOMIC DNA]</scope>
    <source>
        <strain>AX4</strain>
    </source>
</reference>
<dbReference type="EMBL" id="AAFI02000079">
    <property type="protein sequence ID" value="EAL64585.1"/>
    <property type="molecule type" value="Genomic_DNA"/>
</dbReference>
<dbReference type="RefSeq" id="XP_638089.1">
    <property type="nucleotide sequence ID" value="XM_632997.1"/>
</dbReference>
<dbReference type="PaxDb" id="44689-DDB0186531"/>
<dbReference type="EnsemblProtists" id="EAL64585">
    <property type="protein sequence ID" value="EAL64585"/>
    <property type="gene ID" value="DDB_G0285495"/>
</dbReference>
<dbReference type="GeneID" id="8625135"/>
<dbReference type="KEGG" id="ddi:DDB_G0285495"/>
<dbReference type="dictyBase" id="DDB_G0285495"/>
<dbReference type="VEuPathDB" id="AmoebaDB:DDB_G0285495"/>
<dbReference type="eggNOG" id="ENOG502RG0C">
    <property type="taxonomic scope" value="Eukaryota"/>
</dbReference>
<dbReference type="HOGENOM" id="CLU_551448_0_0_1"/>
<dbReference type="InParanoid" id="Q54N54"/>
<dbReference type="OMA" id="KCIYLAK"/>
<dbReference type="PRO" id="PR:Q54N54"/>
<dbReference type="Proteomes" id="UP000002195">
    <property type="component" value="Chromosome 4"/>
</dbReference>
<dbReference type="PANTHER" id="PTHR48209">
    <property type="entry name" value="AGL056WP"/>
    <property type="match status" value="1"/>
</dbReference>
<gene>
    <name type="ORF">DDB_G0285495</name>
</gene>
<feature type="chain" id="PRO_0000350807" description="Putative uncharacterized protein DDB_G0285495">
    <location>
        <begin position="1"/>
        <end position="495"/>
    </location>
</feature>
<feature type="region of interest" description="Disordered" evidence="1">
    <location>
        <begin position="305"/>
        <end position="404"/>
    </location>
</feature>
<feature type="compositionally biased region" description="Low complexity" evidence="1">
    <location>
        <begin position="305"/>
        <end position="317"/>
    </location>
</feature>
<feature type="compositionally biased region" description="Acidic residues" evidence="1">
    <location>
        <begin position="335"/>
        <end position="347"/>
    </location>
</feature>
<feature type="compositionally biased region" description="Low complexity" evidence="1">
    <location>
        <begin position="348"/>
        <end position="363"/>
    </location>
</feature>
<feature type="compositionally biased region" description="Acidic residues" evidence="1">
    <location>
        <begin position="386"/>
        <end position="398"/>
    </location>
</feature>
<evidence type="ECO:0000256" key="1">
    <source>
        <dbReference type="SAM" id="MobiDB-lite"/>
    </source>
</evidence>
<keyword id="KW-1185">Reference proteome</keyword>